<comment type="function">
    <text evidence="1">Catalyzes the transfer of an acyl group from acyl-phosphate (acyl-PO(4)) to glycerol-3-phosphate (G3P) to form lysophosphatidic acid (LPA). This enzyme utilizes acyl-phosphate as fatty acyl donor, but not acyl-CoA or acyl-ACP.</text>
</comment>
<comment type="catalytic activity">
    <reaction evidence="1">
        <text>an acyl phosphate + sn-glycerol 3-phosphate = a 1-acyl-sn-glycero-3-phosphate + phosphate</text>
        <dbReference type="Rhea" id="RHEA:34075"/>
        <dbReference type="ChEBI" id="CHEBI:43474"/>
        <dbReference type="ChEBI" id="CHEBI:57597"/>
        <dbReference type="ChEBI" id="CHEBI:57970"/>
        <dbReference type="ChEBI" id="CHEBI:59918"/>
        <dbReference type="EC" id="2.3.1.275"/>
    </reaction>
</comment>
<comment type="pathway">
    <text evidence="1">Lipid metabolism; phospholipid metabolism.</text>
</comment>
<comment type="subunit">
    <text evidence="1">Probably interacts with PlsX.</text>
</comment>
<comment type="subcellular location">
    <subcellularLocation>
        <location evidence="1">Cell membrane</location>
        <topology evidence="1">Multi-pass membrane protein</topology>
    </subcellularLocation>
</comment>
<comment type="similarity">
    <text evidence="1">Belongs to the PlsY family.</text>
</comment>
<organism>
    <name type="scientific">Streptococcus agalactiae serotype V (strain ATCC BAA-611 / 2603 V/R)</name>
    <dbReference type="NCBI Taxonomy" id="208435"/>
    <lineage>
        <taxon>Bacteria</taxon>
        <taxon>Bacillati</taxon>
        <taxon>Bacillota</taxon>
        <taxon>Bacilli</taxon>
        <taxon>Lactobacillales</taxon>
        <taxon>Streptococcaceae</taxon>
        <taxon>Streptococcus</taxon>
    </lineage>
</organism>
<name>PLSY_STRA5</name>
<gene>
    <name evidence="1" type="primary">plsY</name>
    <name type="ordered locus">SAG1155</name>
</gene>
<feature type="chain" id="PRO_0000188461" description="Glycerol-3-phosphate acyltransferase">
    <location>
        <begin position="1"/>
        <end position="212"/>
    </location>
</feature>
<feature type="transmembrane region" description="Helical" evidence="1">
    <location>
        <begin position="3"/>
        <end position="23"/>
    </location>
</feature>
<feature type="transmembrane region" description="Helical" evidence="1">
    <location>
        <begin position="70"/>
        <end position="90"/>
    </location>
</feature>
<feature type="transmembrane region" description="Helical" evidence="1">
    <location>
        <begin position="110"/>
        <end position="130"/>
    </location>
</feature>
<feature type="transmembrane region" description="Helical" evidence="1">
    <location>
        <begin position="143"/>
        <end position="163"/>
    </location>
</feature>
<feature type="transmembrane region" description="Helical" evidence="1">
    <location>
        <begin position="164"/>
        <end position="184"/>
    </location>
</feature>
<accession>P67167</accession>
<accession>P59254</accession>
<proteinExistence type="inferred from homology"/>
<sequence length="212" mass="23403">MNIIIMIIIAYLLGSIQTGLWIGKYFYQVNLRQHGSGNTGTTNTFRILGVKAGIVTLTIDILKGTLATLIPIILGITTVSPFFIGFFAIIGHTFPIFAQFKGGKAVATSAGVLLGFAPSFFLYLLVIFLLTLYLFSMISLSSITVAVVGILSVLIFPLVGFILTDYDWIFTTVVILMALTIIIRHQDNIKRIRKRQENLVPFGLNLSKQKNK</sequence>
<keyword id="KW-1003">Cell membrane</keyword>
<keyword id="KW-0444">Lipid biosynthesis</keyword>
<keyword id="KW-0443">Lipid metabolism</keyword>
<keyword id="KW-0472">Membrane</keyword>
<keyword id="KW-0594">Phospholipid biosynthesis</keyword>
<keyword id="KW-1208">Phospholipid metabolism</keyword>
<keyword id="KW-1185">Reference proteome</keyword>
<keyword id="KW-0808">Transferase</keyword>
<keyword id="KW-0812">Transmembrane</keyword>
<keyword id="KW-1133">Transmembrane helix</keyword>
<protein>
    <recommendedName>
        <fullName evidence="1">Glycerol-3-phosphate acyltransferase</fullName>
    </recommendedName>
    <alternativeName>
        <fullName evidence="1">Acyl-PO4 G3P acyltransferase</fullName>
    </alternativeName>
    <alternativeName>
        <fullName evidence="1">Acyl-phosphate--glycerol-3-phosphate acyltransferase</fullName>
    </alternativeName>
    <alternativeName>
        <fullName evidence="1">G3P acyltransferase</fullName>
        <shortName evidence="1">GPAT</shortName>
        <ecNumber evidence="1">2.3.1.275</ecNumber>
    </alternativeName>
    <alternativeName>
        <fullName evidence="1">Lysophosphatidic acid synthase</fullName>
        <shortName evidence="1">LPA synthase</shortName>
    </alternativeName>
</protein>
<reference key="1">
    <citation type="journal article" date="2002" name="Proc. Natl. Acad. Sci. U.S.A.">
        <title>Complete genome sequence and comparative genomic analysis of an emerging human pathogen, serotype V Streptococcus agalactiae.</title>
        <authorList>
            <person name="Tettelin H."/>
            <person name="Masignani V."/>
            <person name="Cieslewicz M.J."/>
            <person name="Eisen J.A."/>
            <person name="Peterson S.N."/>
            <person name="Wessels M.R."/>
            <person name="Paulsen I.T."/>
            <person name="Nelson K.E."/>
            <person name="Margarit I."/>
            <person name="Read T.D."/>
            <person name="Madoff L.C."/>
            <person name="Wolf A.M."/>
            <person name="Beanan M.J."/>
            <person name="Brinkac L.M."/>
            <person name="Daugherty S.C."/>
            <person name="DeBoy R.T."/>
            <person name="Durkin A.S."/>
            <person name="Kolonay J.F."/>
            <person name="Madupu R."/>
            <person name="Lewis M.R."/>
            <person name="Radune D."/>
            <person name="Fedorova N.B."/>
            <person name="Scanlan D."/>
            <person name="Khouri H.M."/>
            <person name="Mulligan S."/>
            <person name="Carty H.A."/>
            <person name="Cline R.T."/>
            <person name="Van Aken S.E."/>
            <person name="Gill J."/>
            <person name="Scarselli M."/>
            <person name="Mora M."/>
            <person name="Iacobini E.T."/>
            <person name="Brettoni C."/>
            <person name="Galli G."/>
            <person name="Mariani M."/>
            <person name="Vegni F."/>
            <person name="Maione D."/>
            <person name="Rinaudo D."/>
            <person name="Rappuoli R."/>
            <person name="Telford J.L."/>
            <person name="Kasper D.L."/>
            <person name="Grandi G."/>
            <person name="Fraser C.M."/>
        </authorList>
    </citation>
    <scope>NUCLEOTIDE SEQUENCE [LARGE SCALE GENOMIC DNA]</scope>
    <source>
        <strain>ATCC BAA-611 / 2603 V/R</strain>
    </source>
</reference>
<dbReference type="EC" id="2.3.1.275" evidence="1"/>
<dbReference type="EMBL" id="AE009948">
    <property type="protein sequence ID" value="AAN00037.1"/>
    <property type="molecule type" value="Genomic_DNA"/>
</dbReference>
<dbReference type="RefSeq" id="NP_688164.1">
    <property type="nucleotide sequence ID" value="NC_004116.1"/>
</dbReference>
<dbReference type="RefSeq" id="WP_001021319.1">
    <property type="nucleotide sequence ID" value="NC_004116.1"/>
</dbReference>
<dbReference type="SMR" id="P67167"/>
<dbReference type="STRING" id="208435.SAG1155"/>
<dbReference type="KEGG" id="sag:SAG1155"/>
<dbReference type="PATRIC" id="fig|208435.3.peg.1161"/>
<dbReference type="HOGENOM" id="CLU_081254_0_0_9"/>
<dbReference type="OrthoDB" id="9777124at2"/>
<dbReference type="UniPathway" id="UPA00085"/>
<dbReference type="Proteomes" id="UP000000821">
    <property type="component" value="Chromosome"/>
</dbReference>
<dbReference type="GO" id="GO:0005886">
    <property type="term" value="C:plasma membrane"/>
    <property type="evidence" value="ECO:0007669"/>
    <property type="project" value="UniProtKB-SubCell"/>
</dbReference>
<dbReference type="GO" id="GO:0043772">
    <property type="term" value="F:acyl-phosphate glycerol-3-phosphate acyltransferase activity"/>
    <property type="evidence" value="ECO:0007669"/>
    <property type="project" value="UniProtKB-UniRule"/>
</dbReference>
<dbReference type="GO" id="GO:0008654">
    <property type="term" value="P:phospholipid biosynthetic process"/>
    <property type="evidence" value="ECO:0007669"/>
    <property type="project" value="UniProtKB-UniRule"/>
</dbReference>
<dbReference type="HAMAP" id="MF_01043">
    <property type="entry name" value="PlsY"/>
    <property type="match status" value="1"/>
</dbReference>
<dbReference type="InterPro" id="IPR003811">
    <property type="entry name" value="G3P_acylTferase_PlsY"/>
</dbReference>
<dbReference type="NCBIfam" id="TIGR00023">
    <property type="entry name" value="glycerol-3-phosphate 1-O-acyltransferase PlsY"/>
    <property type="match status" value="1"/>
</dbReference>
<dbReference type="PANTHER" id="PTHR30309:SF0">
    <property type="entry name" value="GLYCEROL-3-PHOSPHATE ACYLTRANSFERASE-RELATED"/>
    <property type="match status" value="1"/>
</dbReference>
<dbReference type="PANTHER" id="PTHR30309">
    <property type="entry name" value="INNER MEMBRANE PROTEIN YGIH"/>
    <property type="match status" value="1"/>
</dbReference>
<dbReference type="Pfam" id="PF02660">
    <property type="entry name" value="G3P_acyltransf"/>
    <property type="match status" value="1"/>
</dbReference>
<dbReference type="SMART" id="SM01207">
    <property type="entry name" value="G3P_acyltransf"/>
    <property type="match status" value="1"/>
</dbReference>
<evidence type="ECO:0000255" key="1">
    <source>
        <dbReference type="HAMAP-Rule" id="MF_01043"/>
    </source>
</evidence>